<reference key="1">
    <citation type="journal article" date="2001" name="Proc. Natl. Acad. Sci. U.S.A.">
        <title>Complete genomic sequence of Pasteurella multocida Pm70.</title>
        <authorList>
            <person name="May B.J."/>
            <person name="Zhang Q."/>
            <person name="Li L.L."/>
            <person name="Paustian M.L."/>
            <person name="Whittam T.S."/>
            <person name="Kapur V."/>
        </authorList>
    </citation>
    <scope>NUCLEOTIDE SEQUENCE [LARGE SCALE GENOMIC DNA]</scope>
    <source>
        <strain>Pm70</strain>
    </source>
</reference>
<keyword id="KW-0963">Cytoplasm</keyword>
<keyword id="KW-0488">Methylation</keyword>
<keyword id="KW-0648">Protein biosynthesis</keyword>
<keyword id="KW-1185">Reference proteome</keyword>
<accession>P57852</accession>
<gene>
    <name type="primary">prfA</name>
    <name type="ordered locus">PM0555</name>
</gene>
<name>RF1_PASMU</name>
<evidence type="ECO:0000250" key="1"/>
<evidence type="ECO:0000256" key="2">
    <source>
        <dbReference type="SAM" id="MobiDB-lite"/>
    </source>
</evidence>
<evidence type="ECO:0000305" key="3"/>
<feature type="chain" id="PRO_0000177719" description="Peptide chain release factor 1">
    <location>
        <begin position="1"/>
        <end position="360"/>
    </location>
</feature>
<feature type="region of interest" description="Disordered" evidence="2">
    <location>
        <begin position="284"/>
        <end position="309"/>
    </location>
</feature>
<feature type="compositionally biased region" description="Basic and acidic residues" evidence="2">
    <location>
        <begin position="284"/>
        <end position="295"/>
    </location>
</feature>
<feature type="modified residue" description="N5-methylglutamine" evidence="1">
    <location>
        <position position="235"/>
    </location>
</feature>
<comment type="function">
    <text evidence="1">Peptide chain release factor 1 directs the termination of translation in response to the peptide chain termination codons UAG and UAA.</text>
</comment>
<comment type="subcellular location">
    <subcellularLocation>
        <location evidence="1">Cytoplasm</location>
    </subcellularLocation>
</comment>
<comment type="PTM">
    <text evidence="1">Methylated by PrmC. Methylation increases the termination efficiency of RF1 (By similarity).</text>
</comment>
<comment type="similarity">
    <text evidence="3">Belongs to the prokaryotic/mitochondrial release factor family.</text>
</comment>
<sequence length="360" mass="40653">MKPTIISKLESLKERHEELEALLGEASVISDQDKFRAYSKEYAQLEDVVKCFARWNQLNSNMEEAQLLLDDPSMKEMAQEEIEACKTEIEQVEQQLQILLLPKDPNDEYNCYLEIRAGTGGDEAGIFAGDLFRMYSRYAESKRWKVEVLSANESEQGGYKEIIVKVNGEGVYGQLKFESGGHRVQRVPKTESQGRIHTSACTVAVMPELPESELPEINPSDLRIDTYRSSGAGGQHVNTTDSAVRITHIPTGIVVECQDERSQHKNKAKAMSVLASRIVQAEKERQEQAQADTRRNLLGSGDRSDKIRTYNYPQGRVTDHRINLTVYRLDEVMNGKIDELIQPIITEYQADQLAALSEQA</sequence>
<dbReference type="EMBL" id="AE004439">
    <property type="protein sequence ID" value="AAK02639.1"/>
    <property type="molecule type" value="Genomic_DNA"/>
</dbReference>
<dbReference type="RefSeq" id="WP_005751423.1">
    <property type="nucleotide sequence ID" value="NC_002663.1"/>
</dbReference>
<dbReference type="SMR" id="P57852"/>
<dbReference type="STRING" id="272843.PM0555"/>
<dbReference type="EnsemblBacteria" id="AAK02639">
    <property type="protein sequence ID" value="AAK02639"/>
    <property type="gene ID" value="PM0555"/>
</dbReference>
<dbReference type="KEGG" id="pmu:PM0555"/>
<dbReference type="HOGENOM" id="CLU_036856_0_1_6"/>
<dbReference type="OrthoDB" id="9806673at2"/>
<dbReference type="Proteomes" id="UP000000809">
    <property type="component" value="Chromosome"/>
</dbReference>
<dbReference type="GO" id="GO:0005737">
    <property type="term" value="C:cytoplasm"/>
    <property type="evidence" value="ECO:0007669"/>
    <property type="project" value="UniProtKB-SubCell"/>
</dbReference>
<dbReference type="GO" id="GO:0016149">
    <property type="term" value="F:translation release factor activity, codon specific"/>
    <property type="evidence" value="ECO:0007669"/>
    <property type="project" value="UniProtKB-UniRule"/>
</dbReference>
<dbReference type="FunFam" id="3.30.160.20:FF:000004">
    <property type="entry name" value="Peptide chain release factor 1"/>
    <property type="match status" value="1"/>
</dbReference>
<dbReference type="FunFam" id="3.30.70.1660:FF:000002">
    <property type="entry name" value="Peptide chain release factor 1"/>
    <property type="match status" value="1"/>
</dbReference>
<dbReference type="FunFam" id="3.30.70.1660:FF:000004">
    <property type="entry name" value="Peptide chain release factor 1"/>
    <property type="match status" value="1"/>
</dbReference>
<dbReference type="Gene3D" id="3.30.160.20">
    <property type="match status" value="1"/>
</dbReference>
<dbReference type="Gene3D" id="3.30.70.1660">
    <property type="match status" value="1"/>
</dbReference>
<dbReference type="Gene3D" id="6.10.140.1950">
    <property type="match status" value="1"/>
</dbReference>
<dbReference type="HAMAP" id="MF_00093">
    <property type="entry name" value="Rel_fac_1"/>
    <property type="match status" value="1"/>
</dbReference>
<dbReference type="InterPro" id="IPR005139">
    <property type="entry name" value="PCRF"/>
</dbReference>
<dbReference type="InterPro" id="IPR000352">
    <property type="entry name" value="Pep_chain_release_fac_I"/>
</dbReference>
<dbReference type="InterPro" id="IPR045853">
    <property type="entry name" value="Pep_chain_release_fac_I_sf"/>
</dbReference>
<dbReference type="InterPro" id="IPR050057">
    <property type="entry name" value="Prokaryotic/Mito_RF"/>
</dbReference>
<dbReference type="InterPro" id="IPR004373">
    <property type="entry name" value="RF-1"/>
</dbReference>
<dbReference type="NCBIfam" id="TIGR00019">
    <property type="entry name" value="prfA"/>
    <property type="match status" value="1"/>
</dbReference>
<dbReference type="NCBIfam" id="NF001859">
    <property type="entry name" value="PRK00591.1"/>
    <property type="match status" value="1"/>
</dbReference>
<dbReference type="PANTHER" id="PTHR43804">
    <property type="entry name" value="LD18447P"/>
    <property type="match status" value="1"/>
</dbReference>
<dbReference type="PANTHER" id="PTHR43804:SF7">
    <property type="entry name" value="LD18447P"/>
    <property type="match status" value="1"/>
</dbReference>
<dbReference type="Pfam" id="PF03462">
    <property type="entry name" value="PCRF"/>
    <property type="match status" value="1"/>
</dbReference>
<dbReference type="Pfam" id="PF00472">
    <property type="entry name" value="RF-1"/>
    <property type="match status" value="1"/>
</dbReference>
<dbReference type="SMART" id="SM00937">
    <property type="entry name" value="PCRF"/>
    <property type="match status" value="1"/>
</dbReference>
<dbReference type="SUPFAM" id="SSF75620">
    <property type="entry name" value="Release factor"/>
    <property type="match status" value="1"/>
</dbReference>
<dbReference type="PROSITE" id="PS00745">
    <property type="entry name" value="RF_PROK_I"/>
    <property type="match status" value="1"/>
</dbReference>
<protein>
    <recommendedName>
        <fullName>Peptide chain release factor 1</fullName>
        <shortName>RF-1</shortName>
    </recommendedName>
</protein>
<proteinExistence type="inferred from homology"/>
<organism>
    <name type="scientific">Pasteurella multocida (strain Pm70)</name>
    <dbReference type="NCBI Taxonomy" id="272843"/>
    <lineage>
        <taxon>Bacteria</taxon>
        <taxon>Pseudomonadati</taxon>
        <taxon>Pseudomonadota</taxon>
        <taxon>Gammaproteobacteria</taxon>
        <taxon>Pasteurellales</taxon>
        <taxon>Pasteurellaceae</taxon>
        <taxon>Pasteurella</taxon>
    </lineage>
</organism>